<evidence type="ECO:0000250" key="1">
    <source>
        <dbReference type="UniProtKB" id="P03915"/>
    </source>
</evidence>
<evidence type="ECO:0000250" key="2">
    <source>
        <dbReference type="UniProtKB" id="P03920"/>
    </source>
</evidence>
<evidence type="ECO:0000255" key="3"/>
<evidence type="ECO:0000305" key="4"/>
<evidence type="ECO:0000312" key="5">
    <source>
        <dbReference type="Proteomes" id="UP000000437"/>
    </source>
</evidence>
<sequence>MTDMIMPLTLILIFAVLSYPLLKPKSYSKSNNSFQAWNAVHVSFLISLIPLTMMLYKESDHVVMCWSWMNTQAFNVDLSFKFDYYSVTFTSIALFITWSILEFASWYMASYPQKELFYKYLLLFLMSMIILVTANNLFQLFIGWEGVGIMSFLLIGWWFGRTEANTASLQAVIYNRMGDIGFILTLAWMAMYLNSWDIQQIFILSKDFDMTIPQIGLIIAATGKSAQFTLHPWLPSAMEGPTPVSALLHSSTMVVAGIFLLIRLHPIMETNKLAPTICLCLGALTTLFAATCALTQNDIKKIVAFSTSSQLGLMMVAIGLNQPHLAFFHICTHAFFKAMLFLCSGAIIHSLNNEQDIRKMGGTYHTLPMTTNYLTIGKMALMGTPFLAGFFSKDAILEAMTTSHLNAWALTLTLIATSFTAVYSFRMIYLVCLGSPRHKTYETIDENHIPTNTIQRLAWGSIIAGLIISYTMIPLKTPILTMPIYLKLAAILVTLLGIILGLEISTLANKINKNTTPGIPFHFSISLIFFPILHRLIPMRKLFMGESAATKIEKSWSELFGPCGIAFTLMTVATFVKDHRMASIKSYLAVFLTSIILKMMMLKLYT</sequence>
<name>NU5M_DANRE</name>
<proteinExistence type="inferred from homology"/>
<protein>
    <recommendedName>
        <fullName>NADH-ubiquinone oxidoreductase chain 5</fullName>
        <ecNumber evidence="1">7.1.1.2</ecNumber>
    </recommendedName>
    <alternativeName>
        <fullName>NADH dehydrogenase subunit 5</fullName>
    </alternativeName>
</protein>
<dbReference type="EC" id="7.1.1.2" evidence="1"/>
<dbReference type="EMBL" id="AC024175">
    <property type="protein sequence ID" value="AAF74307.1"/>
    <property type="molecule type" value="Genomic_DNA"/>
</dbReference>
<dbReference type="RefSeq" id="NP_059341.1">
    <property type="nucleotide sequence ID" value="NC_002333.2"/>
</dbReference>
<dbReference type="SMR" id="Q9MIY0"/>
<dbReference type="FunCoup" id="Q9MIY0">
    <property type="interactions" value="14"/>
</dbReference>
<dbReference type="STRING" id="7955.ENSDARP00000087879"/>
<dbReference type="PaxDb" id="7955-ENSDARP00000087879"/>
<dbReference type="Ensembl" id="ENSDART00000093622">
    <property type="protein sequence ID" value="ENSDARP00000087879"/>
    <property type="gene ID" value="ENSDARG00000063921"/>
</dbReference>
<dbReference type="GeneID" id="140535"/>
<dbReference type="KEGG" id="dre:140535"/>
<dbReference type="AGR" id="ZFIN:ZDB-GENE-011205-12"/>
<dbReference type="CTD" id="4540"/>
<dbReference type="ZFIN" id="ZDB-GENE-011205-12">
    <property type="gene designation" value="mt-nd5"/>
</dbReference>
<dbReference type="eggNOG" id="KOG4668">
    <property type="taxonomic scope" value="Eukaryota"/>
</dbReference>
<dbReference type="HOGENOM" id="CLU_007100_6_0_1"/>
<dbReference type="InParanoid" id="Q9MIY0"/>
<dbReference type="OMA" id="GVGIMSF"/>
<dbReference type="OrthoDB" id="10069788at2759"/>
<dbReference type="PhylomeDB" id="Q9MIY0"/>
<dbReference type="TreeFam" id="TF342974"/>
<dbReference type="Reactome" id="R-DRE-611105">
    <property type="pathway name" value="Respiratory electron transport"/>
</dbReference>
<dbReference type="PRO" id="PR:Q9MIY0"/>
<dbReference type="Proteomes" id="UP000000437">
    <property type="component" value="Mitochondrion MT"/>
</dbReference>
<dbReference type="Bgee" id="ENSDARG00000063921">
    <property type="expression patterns" value="Expressed in brain and 19 other cell types or tissues"/>
</dbReference>
<dbReference type="GO" id="GO:0005743">
    <property type="term" value="C:mitochondrial inner membrane"/>
    <property type="evidence" value="ECO:0000250"/>
    <property type="project" value="UniProtKB"/>
</dbReference>
<dbReference type="GO" id="GO:0045271">
    <property type="term" value="C:respiratory chain complex I"/>
    <property type="evidence" value="ECO:0000318"/>
    <property type="project" value="GO_Central"/>
</dbReference>
<dbReference type="GO" id="GO:0008137">
    <property type="term" value="F:NADH dehydrogenase (ubiquinone) activity"/>
    <property type="evidence" value="ECO:0000250"/>
    <property type="project" value="UniProtKB"/>
</dbReference>
<dbReference type="GO" id="GO:0015990">
    <property type="term" value="P:electron transport coupled proton transport"/>
    <property type="evidence" value="ECO:0000318"/>
    <property type="project" value="GO_Central"/>
</dbReference>
<dbReference type="GO" id="GO:0006120">
    <property type="term" value="P:mitochondrial electron transport, NADH to ubiquinone"/>
    <property type="evidence" value="ECO:0000250"/>
    <property type="project" value="UniProtKB"/>
</dbReference>
<dbReference type="GO" id="GO:0032981">
    <property type="term" value="P:mitochondrial respiratory chain complex I assembly"/>
    <property type="evidence" value="ECO:0000250"/>
    <property type="project" value="UniProtKB"/>
</dbReference>
<dbReference type="InterPro" id="IPR010934">
    <property type="entry name" value="NADH_DH_su5_C"/>
</dbReference>
<dbReference type="InterPro" id="IPR018393">
    <property type="entry name" value="NADHpl_OxRdtase_5_subgr"/>
</dbReference>
<dbReference type="InterPro" id="IPR001750">
    <property type="entry name" value="ND/Mrp_TM"/>
</dbReference>
<dbReference type="InterPro" id="IPR003945">
    <property type="entry name" value="NU5C-like"/>
</dbReference>
<dbReference type="InterPro" id="IPR001516">
    <property type="entry name" value="Proton_antipo_N"/>
</dbReference>
<dbReference type="NCBIfam" id="TIGR01974">
    <property type="entry name" value="NDH_I_L"/>
    <property type="match status" value="1"/>
</dbReference>
<dbReference type="PANTHER" id="PTHR42829">
    <property type="entry name" value="NADH-UBIQUINONE OXIDOREDUCTASE CHAIN 5"/>
    <property type="match status" value="1"/>
</dbReference>
<dbReference type="PANTHER" id="PTHR42829:SF2">
    <property type="entry name" value="NADH-UBIQUINONE OXIDOREDUCTASE CHAIN 5"/>
    <property type="match status" value="1"/>
</dbReference>
<dbReference type="Pfam" id="PF06455">
    <property type="entry name" value="NADH5_C"/>
    <property type="match status" value="1"/>
</dbReference>
<dbReference type="Pfam" id="PF00361">
    <property type="entry name" value="Proton_antipo_M"/>
    <property type="match status" value="1"/>
</dbReference>
<dbReference type="Pfam" id="PF00662">
    <property type="entry name" value="Proton_antipo_N"/>
    <property type="match status" value="1"/>
</dbReference>
<dbReference type="PRINTS" id="PR01434">
    <property type="entry name" value="NADHDHGNASE5"/>
</dbReference>
<gene>
    <name type="primary">mt-nd5</name>
    <name type="synonym">mtnd5</name>
    <name type="synonym">nd5</name>
</gene>
<keyword id="KW-0249">Electron transport</keyword>
<keyword id="KW-0472">Membrane</keyword>
<keyword id="KW-0496">Mitochondrion</keyword>
<keyword id="KW-0999">Mitochondrion inner membrane</keyword>
<keyword id="KW-0520">NAD</keyword>
<keyword id="KW-1185">Reference proteome</keyword>
<keyword id="KW-0679">Respiratory chain</keyword>
<keyword id="KW-1278">Translocase</keyword>
<keyword id="KW-0812">Transmembrane</keyword>
<keyword id="KW-1133">Transmembrane helix</keyword>
<keyword id="KW-0813">Transport</keyword>
<keyword id="KW-0830">Ubiquinone</keyword>
<comment type="function">
    <text evidence="1">Core subunit of the mitochondrial membrane respiratory chain NADH dehydrogenase (Complex I) which catalyzes electron transfer from NADH through the respiratory chain, using ubiquinone as an electron acceptor. Essential for the catalytic activity and assembly of complex I.</text>
</comment>
<comment type="catalytic activity">
    <reaction evidence="1">
        <text>a ubiquinone + NADH + 5 H(+)(in) = a ubiquinol + NAD(+) + 4 H(+)(out)</text>
        <dbReference type="Rhea" id="RHEA:29091"/>
        <dbReference type="Rhea" id="RHEA-COMP:9565"/>
        <dbReference type="Rhea" id="RHEA-COMP:9566"/>
        <dbReference type="ChEBI" id="CHEBI:15378"/>
        <dbReference type="ChEBI" id="CHEBI:16389"/>
        <dbReference type="ChEBI" id="CHEBI:17976"/>
        <dbReference type="ChEBI" id="CHEBI:57540"/>
        <dbReference type="ChEBI" id="CHEBI:57945"/>
        <dbReference type="EC" id="7.1.1.2"/>
    </reaction>
</comment>
<comment type="subunit">
    <text evidence="2">Core subunit of respiratory chain NADH dehydrogenase (Complex I) which is composed of 45 different subunits.</text>
</comment>
<comment type="subcellular location">
    <subcellularLocation>
        <location evidence="2">Mitochondrion inner membrane</location>
        <topology evidence="3">Multi-pass membrane protein</topology>
    </subcellularLocation>
</comment>
<comment type="similarity">
    <text evidence="4">Belongs to the complex I subunit 5 family.</text>
</comment>
<organism>
    <name type="scientific">Danio rerio</name>
    <name type="common">Zebrafish</name>
    <name type="synonym">Brachydanio rerio</name>
    <dbReference type="NCBI Taxonomy" id="7955"/>
    <lineage>
        <taxon>Eukaryota</taxon>
        <taxon>Metazoa</taxon>
        <taxon>Chordata</taxon>
        <taxon>Craniata</taxon>
        <taxon>Vertebrata</taxon>
        <taxon>Euteleostomi</taxon>
        <taxon>Actinopterygii</taxon>
        <taxon>Neopterygii</taxon>
        <taxon>Teleostei</taxon>
        <taxon>Ostariophysi</taxon>
        <taxon>Cypriniformes</taxon>
        <taxon>Danionidae</taxon>
        <taxon>Danioninae</taxon>
        <taxon>Danio</taxon>
    </lineage>
</organism>
<accession>Q9MIY0</accession>
<geneLocation type="mitochondrion"/>
<feature type="chain" id="PRO_0000118071" description="NADH-ubiquinone oxidoreductase chain 5">
    <location>
        <begin position="1"/>
        <end position="606"/>
    </location>
</feature>
<feature type="transmembrane region" description="Helical" evidence="3">
    <location>
        <begin position="2"/>
        <end position="22"/>
    </location>
</feature>
<feature type="transmembrane region" description="Helical" evidence="3">
    <location>
        <begin position="36"/>
        <end position="56"/>
    </location>
</feature>
<feature type="transmembrane region" description="Helical" evidence="3">
    <location>
        <begin position="89"/>
        <end position="109"/>
    </location>
</feature>
<feature type="transmembrane region" description="Helical" evidence="3">
    <location>
        <begin position="115"/>
        <end position="135"/>
    </location>
</feature>
<feature type="transmembrane region" description="Helical" evidence="3">
    <location>
        <begin position="140"/>
        <end position="160"/>
    </location>
</feature>
<feature type="transmembrane region" description="Helical" evidence="3">
    <location>
        <begin position="178"/>
        <end position="198"/>
    </location>
</feature>
<feature type="transmembrane region" description="Helical" evidence="3">
    <location>
        <begin position="212"/>
        <end position="234"/>
    </location>
</feature>
<feature type="transmembrane region" description="Helical" evidence="3">
    <location>
        <begin position="242"/>
        <end position="262"/>
    </location>
</feature>
<feature type="transmembrane region" description="Helical" evidence="3">
    <location>
        <begin position="273"/>
        <end position="293"/>
    </location>
</feature>
<feature type="transmembrane region" description="Helical" evidence="3">
    <location>
        <begin position="302"/>
        <end position="322"/>
    </location>
</feature>
<feature type="transmembrane region" description="Helical" evidence="3">
    <location>
        <begin position="328"/>
        <end position="348"/>
    </location>
</feature>
<feature type="transmembrane region" description="Helical" evidence="3">
    <location>
        <begin position="371"/>
        <end position="391"/>
    </location>
</feature>
<feature type="transmembrane region" description="Helical" evidence="3">
    <location>
        <begin position="405"/>
        <end position="425"/>
    </location>
</feature>
<feature type="transmembrane region" description="Helical" evidence="3">
    <location>
        <begin position="462"/>
        <end position="482"/>
    </location>
</feature>
<feature type="transmembrane region" description="Helical" evidence="3">
    <location>
        <begin position="488"/>
        <end position="508"/>
    </location>
</feature>
<feature type="transmembrane region" description="Helical" evidence="3">
    <location>
        <begin position="519"/>
        <end position="539"/>
    </location>
</feature>
<feature type="transmembrane region" description="Helical" evidence="3">
    <location>
        <begin position="556"/>
        <end position="576"/>
    </location>
</feature>
<feature type="transmembrane region" description="Helical" evidence="3">
    <location>
        <begin position="582"/>
        <end position="602"/>
    </location>
</feature>
<reference key="1">
    <citation type="journal article" date="2001" name="Genome Res.">
        <title>The complete sequence of the zebrafish (Danio rerio) mitochondrial genome and evolutionary patterns in vertebrate mitochondrial DNA.</title>
        <authorList>
            <person name="Broughton R.E."/>
            <person name="Milam J.E."/>
            <person name="Roe B.A."/>
        </authorList>
    </citation>
    <scope>NUCLEOTIDE SEQUENCE [LARGE SCALE GENOMIC DNA]</scope>
    <source>
        <strain evidence="5">Tuebingen</strain>
    </source>
</reference>